<feature type="chain" id="PRO_1000068459" description="Glutathione-regulated potassium-efflux system protein KefC">
    <location>
        <begin position="1"/>
        <end position="621"/>
    </location>
</feature>
<feature type="transmembrane region" description="Helical" evidence="1">
    <location>
        <begin position="4"/>
        <end position="24"/>
    </location>
</feature>
<feature type="transmembrane region" description="Helical" evidence="1">
    <location>
        <begin position="26"/>
        <end position="46"/>
    </location>
</feature>
<feature type="transmembrane region" description="Helical" evidence="1">
    <location>
        <begin position="54"/>
        <end position="74"/>
    </location>
</feature>
<feature type="transmembrane region" description="Helical" evidence="1">
    <location>
        <begin position="90"/>
        <end position="110"/>
    </location>
</feature>
<feature type="transmembrane region" description="Helical" evidence="1">
    <location>
        <begin position="114"/>
        <end position="134"/>
    </location>
</feature>
<feature type="transmembrane region" description="Helical" evidence="1">
    <location>
        <begin position="151"/>
        <end position="171"/>
    </location>
</feature>
<feature type="transmembrane region" description="Helical" evidence="1">
    <location>
        <begin position="178"/>
        <end position="198"/>
    </location>
</feature>
<feature type="transmembrane region" description="Helical" evidence="1">
    <location>
        <begin position="218"/>
        <end position="238"/>
    </location>
</feature>
<feature type="transmembrane region" description="Helical" evidence="1">
    <location>
        <begin position="270"/>
        <end position="290"/>
    </location>
</feature>
<feature type="transmembrane region" description="Helical" evidence="1">
    <location>
        <begin position="294"/>
        <end position="314"/>
    </location>
</feature>
<feature type="transmembrane region" description="Helical" evidence="1">
    <location>
        <begin position="327"/>
        <end position="347"/>
    </location>
</feature>
<feature type="transmembrane region" description="Helical" evidence="1">
    <location>
        <begin position="359"/>
        <end position="379"/>
    </location>
</feature>
<feature type="domain" description="RCK N-terminal" evidence="2">
    <location>
        <begin position="399"/>
        <end position="518"/>
    </location>
</feature>
<feature type="region of interest" description="Disordered" evidence="3">
    <location>
        <begin position="591"/>
        <end position="621"/>
    </location>
</feature>
<feature type="compositionally biased region" description="Basic and acidic residues" evidence="3">
    <location>
        <begin position="603"/>
        <end position="621"/>
    </location>
</feature>
<reference key="1">
    <citation type="journal article" date="2010" name="PLoS Genet.">
        <title>Genome sequence of the plant growth promoting endophytic bacterium Enterobacter sp. 638.</title>
        <authorList>
            <person name="Taghavi S."/>
            <person name="van der Lelie D."/>
            <person name="Hoffman A."/>
            <person name="Zhang Y.B."/>
            <person name="Walla M.D."/>
            <person name="Vangronsveld J."/>
            <person name="Newman L."/>
            <person name="Monchy S."/>
        </authorList>
    </citation>
    <scope>NUCLEOTIDE SEQUENCE [LARGE SCALE GENOMIC DNA]</scope>
    <source>
        <strain>638</strain>
    </source>
</reference>
<protein>
    <recommendedName>
        <fullName evidence="1">Glutathione-regulated potassium-efflux system protein KefC</fullName>
    </recommendedName>
    <alternativeName>
        <fullName evidence="1">K(+)/H(+) antiporter</fullName>
    </alternativeName>
</protein>
<evidence type="ECO:0000255" key="1">
    <source>
        <dbReference type="HAMAP-Rule" id="MF_01413"/>
    </source>
</evidence>
<evidence type="ECO:0000255" key="2">
    <source>
        <dbReference type="PROSITE-ProRule" id="PRU00543"/>
    </source>
</evidence>
<evidence type="ECO:0000256" key="3">
    <source>
        <dbReference type="SAM" id="MobiDB-lite"/>
    </source>
</evidence>
<name>KEFC_ENT38</name>
<sequence>MDSHTLIQALIYLGAAALIVPVAVRLGLGSVLGYLIAGCIIGPWGFRLVTDAESILHFAEIGVVLMLFVIGLELDPRRLWKLRASVFGGGALQMIACGALLGGFCILLGMDWKVAELIGMTLALSSTAIAMQAMNERNLTVSQMGRSTFSVLLFQDIAAIPLVAMIPLLAVSGSSTTLGAFALSALKVAGALALVILLGRYVTRPLLRFVARSGLREVFSAVALFLVFGFGLLLEEAGLSMAMGAFLAGVLLASSEYRHALESDIEPFKGLLLGLFFIGVGMSVDFGTLVTHPLRILILLVGFLVIKMGMLWLIARPLNVPNRQRRWFAVLLGQGSEFAFVVFGAAQMANVLDPEWAKALTLAVALSMAVTPILLVLLTRLEQSGSEQDREADEIDEEQPRVIIAGFGRFGQISGRLLLSSGVKMVILDHDPDHIETLRKFGMKVFYGDATRVDLLESAGAAKAEVLINAIDDPLTNLQLAELAKEHFPNLKIISRARDVDHYIKLRQAGVETPERETFEGALKTGRMALEGLGLGAYEARERADLFRRFNLDMVEEMVEMADGDASSRAAAVKRTSAMLTEIINEDRNHLSLTQRHGWQGTEEGKHTGDPRDEPESKPTV</sequence>
<comment type="function">
    <text evidence="1">Pore-forming subunit of a potassium efflux system that confers protection against electrophiles. Catalyzes K(+)/H(+) antiport.</text>
</comment>
<comment type="subunit">
    <text evidence="1">Homodimer. Interacts with the regulatory subunit KefF.</text>
</comment>
<comment type="subcellular location">
    <subcellularLocation>
        <location evidence="1">Cell inner membrane</location>
        <topology evidence="1">Multi-pass membrane protein</topology>
    </subcellularLocation>
</comment>
<comment type="similarity">
    <text evidence="1">Belongs to the monovalent cation:proton antiporter 2 (CPA2) transporter (TC 2.A.37) family. KefC subfamily.</text>
</comment>
<gene>
    <name evidence="1" type="primary">kefC</name>
    <name type="ordered locus">Ent638_0596</name>
</gene>
<accession>A4W6F3</accession>
<keyword id="KW-0050">Antiport</keyword>
<keyword id="KW-0997">Cell inner membrane</keyword>
<keyword id="KW-1003">Cell membrane</keyword>
<keyword id="KW-0406">Ion transport</keyword>
<keyword id="KW-0472">Membrane</keyword>
<keyword id="KW-0630">Potassium</keyword>
<keyword id="KW-0633">Potassium transport</keyword>
<keyword id="KW-0812">Transmembrane</keyword>
<keyword id="KW-1133">Transmembrane helix</keyword>
<keyword id="KW-0813">Transport</keyword>
<organism>
    <name type="scientific">Enterobacter sp. (strain 638)</name>
    <dbReference type="NCBI Taxonomy" id="399742"/>
    <lineage>
        <taxon>Bacteria</taxon>
        <taxon>Pseudomonadati</taxon>
        <taxon>Pseudomonadota</taxon>
        <taxon>Gammaproteobacteria</taxon>
        <taxon>Enterobacterales</taxon>
        <taxon>Enterobacteriaceae</taxon>
        <taxon>Enterobacter</taxon>
    </lineage>
</organism>
<dbReference type="EMBL" id="CP000653">
    <property type="protein sequence ID" value="ABP59283.1"/>
    <property type="molecule type" value="Genomic_DNA"/>
</dbReference>
<dbReference type="RefSeq" id="WP_012016005.1">
    <property type="nucleotide sequence ID" value="NC_009436.1"/>
</dbReference>
<dbReference type="SMR" id="A4W6F3"/>
<dbReference type="STRING" id="399742.Ent638_0596"/>
<dbReference type="KEGG" id="ent:Ent638_0596"/>
<dbReference type="eggNOG" id="COG0475">
    <property type="taxonomic scope" value="Bacteria"/>
</dbReference>
<dbReference type="eggNOG" id="COG1226">
    <property type="taxonomic scope" value="Bacteria"/>
</dbReference>
<dbReference type="HOGENOM" id="CLU_005126_9_3_6"/>
<dbReference type="OrthoDB" id="9781411at2"/>
<dbReference type="Proteomes" id="UP000000230">
    <property type="component" value="Chromosome"/>
</dbReference>
<dbReference type="GO" id="GO:0005886">
    <property type="term" value="C:plasma membrane"/>
    <property type="evidence" value="ECO:0007669"/>
    <property type="project" value="UniProtKB-SubCell"/>
</dbReference>
<dbReference type="GO" id="GO:0019899">
    <property type="term" value="F:enzyme binding"/>
    <property type="evidence" value="ECO:0007669"/>
    <property type="project" value="InterPro"/>
</dbReference>
<dbReference type="GO" id="GO:0015503">
    <property type="term" value="F:glutathione-regulated potassium exporter activity"/>
    <property type="evidence" value="ECO:0007669"/>
    <property type="project" value="UniProtKB-UniRule"/>
</dbReference>
<dbReference type="GO" id="GO:0015643">
    <property type="term" value="F:toxic substance binding"/>
    <property type="evidence" value="ECO:0007669"/>
    <property type="project" value="InterPro"/>
</dbReference>
<dbReference type="GO" id="GO:1902600">
    <property type="term" value="P:proton transmembrane transport"/>
    <property type="evidence" value="ECO:0007669"/>
    <property type="project" value="InterPro"/>
</dbReference>
<dbReference type="GO" id="GO:0051595">
    <property type="term" value="P:response to methylglyoxal"/>
    <property type="evidence" value="ECO:0007669"/>
    <property type="project" value="InterPro"/>
</dbReference>
<dbReference type="FunFam" id="1.20.1530.20:FF:000001">
    <property type="entry name" value="Glutathione-regulated potassium-efflux system protein KefB"/>
    <property type="match status" value="1"/>
</dbReference>
<dbReference type="FunFam" id="3.40.50.720:FF:000036">
    <property type="entry name" value="Glutathione-regulated potassium-efflux system protein KefB"/>
    <property type="match status" value="1"/>
</dbReference>
<dbReference type="Gene3D" id="1.20.1530.20">
    <property type="match status" value="1"/>
</dbReference>
<dbReference type="Gene3D" id="3.40.50.720">
    <property type="entry name" value="NAD(P)-binding Rossmann-like Domain"/>
    <property type="match status" value="1"/>
</dbReference>
<dbReference type="HAMAP" id="MF_01413">
    <property type="entry name" value="K_H_efflux_KefC"/>
    <property type="match status" value="1"/>
</dbReference>
<dbReference type="InterPro" id="IPR006153">
    <property type="entry name" value="Cation/H_exchanger_TM"/>
</dbReference>
<dbReference type="InterPro" id="IPR004771">
    <property type="entry name" value="K/H_exchanger"/>
</dbReference>
<dbReference type="InterPro" id="IPR023941">
    <property type="entry name" value="K_H_efflux_KefC"/>
</dbReference>
<dbReference type="InterPro" id="IPR006036">
    <property type="entry name" value="K_uptake_TrkA"/>
</dbReference>
<dbReference type="InterPro" id="IPR038770">
    <property type="entry name" value="Na+/solute_symporter_sf"/>
</dbReference>
<dbReference type="InterPro" id="IPR036291">
    <property type="entry name" value="NAD(P)-bd_dom_sf"/>
</dbReference>
<dbReference type="InterPro" id="IPR003148">
    <property type="entry name" value="RCK_N"/>
</dbReference>
<dbReference type="NCBIfam" id="TIGR00932">
    <property type="entry name" value="2a37"/>
    <property type="match status" value="1"/>
</dbReference>
<dbReference type="NCBIfam" id="NF002924">
    <property type="entry name" value="PRK03562.1"/>
    <property type="match status" value="1"/>
</dbReference>
<dbReference type="PANTHER" id="PTHR46157:SF3">
    <property type="entry name" value="GLUTATHIONE-REGULATED POTASSIUM-EFFLUX SYSTEM PROTEIN KEFC"/>
    <property type="match status" value="1"/>
</dbReference>
<dbReference type="PANTHER" id="PTHR46157">
    <property type="entry name" value="K(+) EFFLUX ANTIPORTER 3, CHLOROPLASTIC"/>
    <property type="match status" value="1"/>
</dbReference>
<dbReference type="Pfam" id="PF00999">
    <property type="entry name" value="Na_H_Exchanger"/>
    <property type="match status" value="1"/>
</dbReference>
<dbReference type="Pfam" id="PF02254">
    <property type="entry name" value="TrkA_N"/>
    <property type="match status" value="1"/>
</dbReference>
<dbReference type="PRINTS" id="PR00335">
    <property type="entry name" value="KUPTAKETRKA"/>
</dbReference>
<dbReference type="SUPFAM" id="SSF51735">
    <property type="entry name" value="NAD(P)-binding Rossmann-fold domains"/>
    <property type="match status" value="1"/>
</dbReference>
<dbReference type="PROSITE" id="PS51201">
    <property type="entry name" value="RCK_N"/>
    <property type="match status" value="1"/>
</dbReference>
<proteinExistence type="inferred from homology"/>